<sequence>MASLKEVKTRINSVQSTRKITSAMKMVASAKLHKAQGAIENMLPYQRKLNKILTNFLSADLPVESPFCVERPVMRVAIVAFSSNSSLCGAFNANVLKMFLQTVGEYRELGQDNILIYPVGKKIEEAVKKLGFFPQGSYQKLADKPSYDEAAALAKLLMELFLEKNIDRVELIYHHFKSMGVQELLRERYLPIDLSAVQNDEERGGVVNDYIIEPSAAQLIADLIPQVLSQKIFTAALDSNASEHAARTLAMQIATDNANELIQELTKQYNKTRQQAITNELLDIVGGSMA</sequence>
<protein>
    <recommendedName>
        <fullName evidence="1">ATP synthase gamma chain</fullName>
    </recommendedName>
    <alternativeName>
        <fullName evidence="1">ATP synthase F1 sector gamma subunit</fullName>
    </alternativeName>
    <alternativeName>
        <fullName evidence="1">F-ATPase gamma subunit</fullName>
    </alternativeName>
</protein>
<accession>Q64UA3</accession>
<keyword id="KW-0066">ATP synthesis</keyword>
<keyword id="KW-0997">Cell inner membrane</keyword>
<keyword id="KW-1003">Cell membrane</keyword>
<keyword id="KW-0139">CF(1)</keyword>
<keyword id="KW-0375">Hydrogen ion transport</keyword>
<keyword id="KW-0406">Ion transport</keyword>
<keyword id="KW-0472">Membrane</keyword>
<keyword id="KW-0813">Transport</keyword>
<comment type="function">
    <text evidence="1">Produces ATP from ADP in the presence of a proton gradient across the membrane. The gamma chain is believed to be important in regulating ATPase activity and the flow of protons through the CF(0) complex.</text>
</comment>
<comment type="subunit">
    <text evidence="1">F-type ATPases have 2 components, CF(1) - the catalytic core - and CF(0) - the membrane proton channel. CF(1) has five subunits: alpha(3), beta(3), gamma(1), delta(1), epsilon(1). CF(0) has three main subunits: a, b and c.</text>
</comment>
<comment type="subcellular location">
    <subcellularLocation>
        <location evidence="1">Cell inner membrane</location>
        <topology evidence="1">Peripheral membrane protein</topology>
    </subcellularLocation>
</comment>
<comment type="similarity">
    <text evidence="1">Belongs to the ATPase gamma chain family.</text>
</comment>
<gene>
    <name evidence="1" type="primary">atpG</name>
    <name type="ordered locus">BF2179</name>
</gene>
<feature type="chain" id="PRO_0000073236" description="ATP synthase gamma chain">
    <location>
        <begin position="1"/>
        <end position="290"/>
    </location>
</feature>
<proteinExistence type="inferred from homology"/>
<organism>
    <name type="scientific">Bacteroides fragilis (strain YCH46)</name>
    <dbReference type="NCBI Taxonomy" id="295405"/>
    <lineage>
        <taxon>Bacteria</taxon>
        <taxon>Pseudomonadati</taxon>
        <taxon>Bacteroidota</taxon>
        <taxon>Bacteroidia</taxon>
        <taxon>Bacteroidales</taxon>
        <taxon>Bacteroidaceae</taxon>
        <taxon>Bacteroides</taxon>
    </lineage>
</organism>
<reference key="1">
    <citation type="journal article" date="2004" name="Proc. Natl. Acad. Sci. U.S.A.">
        <title>Genomic analysis of Bacteroides fragilis reveals extensive DNA inversions regulating cell surface adaptation.</title>
        <authorList>
            <person name="Kuwahara T."/>
            <person name="Yamashita A."/>
            <person name="Hirakawa H."/>
            <person name="Nakayama H."/>
            <person name="Toh H."/>
            <person name="Okada N."/>
            <person name="Kuhara S."/>
            <person name="Hattori M."/>
            <person name="Hayashi T."/>
            <person name="Ohnishi Y."/>
        </authorList>
    </citation>
    <scope>NUCLEOTIDE SEQUENCE [LARGE SCALE GENOMIC DNA]</scope>
    <source>
        <strain>YCH46</strain>
    </source>
</reference>
<evidence type="ECO:0000255" key="1">
    <source>
        <dbReference type="HAMAP-Rule" id="MF_00815"/>
    </source>
</evidence>
<name>ATPG_BACFR</name>
<dbReference type="EMBL" id="AP006841">
    <property type="protein sequence ID" value="BAD48926.1"/>
    <property type="molecule type" value="Genomic_DNA"/>
</dbReference>
<dbReference type="RefSeq" id="WP_011202768.1">
    <property type="nucleotide sequence ID" value="NC_006347.1"/>
</dbReference>
<dbReference type="RefSeq" id="YP_099460.1">
    <property type="nucleotide sequence ID" value="NC_006347.1"/>
</dbReference>
<dbReference type="SMR" id="Q64UA3"/>
<dbReference type="STRING" id="295405.BF2179"/>
<dbReference type="KEGG" id="bfr:BF2179"/>
<dbReference type="PATRIC" id="fig|295405.11.peg.2116"/>
<dbReference type="HOGENOM" id="CLU_050669_0_1_10"/>
<dbReference type="OrthoDB" id="9812769at2"/>
<dbReference type="Proteomes" id="UP000002197">
    <property type="component" value="Chromosome"/>
</dbReference>
<dbReference type="GO" id="GO:0005886">
    <property type="term" value="C:plasma membrane"/>
    <property type="evidence" value="ECO:0007669"/>
    <property type="project" value="UniProtKB-SubCell"/>
</dbReference>
<dbReference type="GO" id="GO:0045259">
    <property type="term" value="C:proton-transporting ATP synthase complex"/>
    <property type="evidence" value="ECO:0007669"/>
    <property type="project" value="UniProtKB-KW"/>
</dbReference>
<dbReference type="GO" id="GO:0005524">
    <property type="term" value="F:ATP binding"/>
    <property type="evidence" value="ECO:0007669"/>
    <property type="project" value="UniProtKB-UniRule"/>
</dbReference>
<dbReference type="GO" id="GO:0046933">
    <property type="term" value="F:proton-transporting ATP synthase activity, rotational mechanism"/>
    <property type="evidence" value="ECO:0007669"/>
    <property type="project" value="UniProtKB-UniRule"/>
</dbReference>
<dbReference type="GO" id="GO:0042777">
    <property type="term" value="P:proton motive force-driven plasma membrane ATP synthesis"/>
    <property type="evidence" value="ECO:0007669"/>
    <property type="project" value="UniProtKB-UniRule"/>
</dbReference>
<dbReference type="CDD" id="cd12151">
    <property type="entry name" value="F1-ATPase_gamma"/>
    <property type="match status" value="1"/>
</dbReference>
<dbReference type="FunFam" id="1.10.287.80:FF:000006">
    <property type="entry name" value="ATP synthase gamma chain"/>
    <property type="match status" value="1"/>
</dbReference>
<dbReference type="Gene3D" id="3.40.1380.10">
    <property type="match status" value="1"/>
</dbReference>
<dbReference type="Gene3D" id="1.10.287.80">
    <property type="entry name" value="ATP synthase, gamma subunit, helix hairpin domain"/>
    <property type="match status" value="2"/>
</dbReference>
<dbReference type="HAMAP" id="MF_00815">
    <property type="entry name" value="ATP_synth_gamma_bact"/>
    <property type="match status" value="1"/>
</dbReference>
<dbReference type="InterPro" id="IPR035968">
    <property type="entry name" value="ATP_synth_F1_ATPase_gsu"/>
</dbReference>
<dbReference type="InterPro" id="IPR000131">
    <property type="entry name" value="ATP_synth_F1_gsu"/>
</dbReference>
<dbReference type="NCBIfam" id="TIGR01146">
    <property type="entry name" value="ATPsyn_F1gamma"/>
    <property type="match status" value="1"/>
</dbReference>
<dbReference type="NCBIfam" id="NF009959">
    <property type="entry name" value="PRK13426.1"/>
    <property type="match status" value="1"/>
</dbReference>
<dbReference type="PANTHER" id="PTHR11693">
    <property type="entry name" value="ATP SYNTHASE GAMMA CHAIN"/>
    <property type="match status" value="1"/>
</dbReference>
<dbReference type="PANTHER" id="PTHR11693:SF22">
    <property type="entry name" value="ATP SYNTHASE SUBUNIT GAMMA, MITOCHONDRIAL"/>
    <property type="match status" value="1"/>
</dbReference>
<dbReference type="Pfam" id="PF00231">
    <property type="entry name" value="ATP-synt"/>
    <property type="match status" value="1"/>
</dbReference>
<dbReference type="PRINTS" id="PR00126">
    <property type="entry name" value="ATPASEGAMMA"/>
</dbReference>
<dbReference type="SUPFAM" id="SSF52943">
    <property type="entry name" value="ATP synthase (F1-ATPase), gamma subunit"/>
    <property type="match status" value="1"/>
</dbReference>